<proteinExistence type="evidence at protein level"/>
<feature type="chain" id="PRO_0000160075" description="Superoxide dismutase [Mn] 1">
    <location>
        <begin position="1"/>
        <end position="199"/>
    </location>
</feature>
<feature type="binding site" evidence="1">
    <location>
        <position position="27"/>
    </location>
    <ligand>
        <name>Mn(2+)</name>
        <dbReference type="ChEBI" id="CHEBI:29035"/>
    </ligand>
</feature>
<feature type="binding site" evidence="1">
    <location>
        <position position="81"/>
    </location>
    <ligand>
        <name>Mn(2+)</name>
        <dbReference type="ChEBI" id="CHEBI:29035"/>
    </ligand>
</feature>
<feature type="binding site" evidence="1">
    <location>
        <position position="161"/>
    </location>
    <ligand>
        <name>Mn(2+)</name>
        <dbReference type="ChEBI" id="CHEBI:29035"/>
    </ligand>
</feature>
<feature type="binding site" evidence="1">
    <location>
        <position position="165"/>
    </location>
    <ligand>
        <name>Mn(2+)</name>
        <dbReference type="ChEBI" id="CHEBI:29035"/>
    </ligand>
</feature>
<feature type="turn" evidence="9">
    <location>
        <begin position="12"/>
        <end position="18"/>
    </location>
</feature>
<feature type="helix" evidence="9">
    <location>
        <begin position="21"/>
        <end position="29"/>
    </location>
</feature>
<feature type="helix" evidence="9">
    <location>
        <begin position="31"/>
        <end position="43"/>
    </location>
</feature>
<feature type="strand" evidence="8">
    <location>
        <begin position="44"/>
        <end position="46"/>
    </location>
</feature>
<feature type="helix" evidence="9">
    <location>
        <begin position="47"/>
        <end position="50"/>
    </location>
</feature>
<feature type="helix" evidence="9">
    <location>
        <begin position="53"/>
        <end position="58"/>
    </location>
</feature>
<feature type="helix" evidence="9">
    <location>
        <begin position="60"/>
        <end position="62"/>
    </location>
</feature>
<feature type="helix" evidence="9">
    <location>
        <begin position="65"/>
        <end position="86"/>
    </location>
</feature>
<feature type="helix" evidence="9">
    <location>
        <begin position="97"/>
        <end position="106"/>
    </location>
</feature>
<feature type="helix" evidence="9">
    <location>
        <begin position="109"/>
        <end position="121"/>
    </location>
</feature>
<feature type="strand" evidence="9">
    <location>
        <begin position="125"/>
        <end position="134"/>
    </location>
</feature>
<feature type="strand" evidence="9">
    <location>
        <begin position="137"/>
        <end position="144"/>
    </location>
</feature>
<feature type="helix" evidence="9">
    <location>
        <begin position="149"/>
        <end position="152"/>
    </location>
</feature>
<feature type="strand" evidence="9">
    <location>
        <begin position="155"/>
        <end position="161"/>
    </location>
</feature>
<feature type="helix" evidence="9">
    <location>
        <begin position="164"/>
        <end position="166"/>
    </location>
</feature>
<feature type="helix" evidence="9">
    <location>
        <begin position="168"/>
        <end position="171"/>
    </location>
</feature>
<feature type="helix" evidence="9">
    <location>
        <begin position="175"/>
        <end position="182"/>
    </location>
</feature>
<feature type="helix" evidence="9">
    <location>
        <begin position="183"/>
        <end position="185"/>
    </location>
</feature>
<feature type="helix" evidence="9">
    <location>
        <begin position="188"/>
        <end position="196"/>
    </location>
</feature>
<comment type="function">
    <text evidence="2 5 6">Destroys superoxide anion radicals which are normally produced within the cells and which are toxic to biological systems. May play a role in maintaining cell viability throughout all stages of growth, but may be the major SOD activity in the exponential growth-phase. Has a role in resisting external superoxide stress. Involved in acid tolerance and the acid-adaptive response. Mediates the derepression of perR regulon in the response to HOCl stress when the level of SOD activity is low.</text>
</comment>
<comment type="catalytic activity">
    <reaction evidence="2 3 4">
        <text>2 superoxide + 2 H(+) = H2O2 + O2</text>
        <dbReference type="Rhea" id="RHEA:20696"/>
        <dbReference type="ChEBI" id="CHEBI:15378"/>
        <dbReference type="ChEBI" id="CHEBI:15379"/>
        <dbReference type="ChEBI" id="CHEBI:16240"/>
        <dbReference type="ChEBI" id="CHEBI:18421"/>
        <dbReference type="EC" id="1.15.1.1"/>
    </reaction>
</comment>
<comment type="cofactor">
    <cofactor evidence="1">
        <name>Mn(2+)</name>
        <dbReference type="ChEBI" id="CHEBI:29035"/>
    </cofactor>
    <text evidence="1">Binds 1 Mn(2+) ion per subunit.</text>
</comment>
<comment type="subunit">
    <text evidence="4">Homodimer. Can also form a heterodimer with SodM.</text>
</comment>
<comment type="induction">
    <text>Transcriptionally induced by internally generated superoxide stress in a manganese-dependent way. The presence of manganese increases SodA homodimer activity and simultaneously decreases SodM homodimer activity. This occurs primarily due to post-transcriptional effects, since the expression of the gene is independent of manganese availability in the absence of superoxide generating compounds.</text>
</comment>
<comment type="miscellaneous">
    <text>According to PubMed:10383955 the levels of SodA activity and sodA expression are growth-phase dependent, occurring most during post-exponential phase. This response was also dependent on the level of aeration, with highest activity and expression occurring under high aeration.</text>
</comment>
<comment type="miscellaneous">
    <text>Transcribed from two sigma-A-type promoters (PA1 and PA2). Transcriptional data show an indirect repression of PA1 promoter by sigma-B.</text>
</comment>
<comment type="similarity">
    <text evidence="7">Belongs to the iron/manganese superoxide dismutase family.</text>
</comment>
<reference key="1">
    <citation type="journal article" date="1999" name="J. Bacteriol.">
        <title>Characterization of the major superoxide dismutase of Staphylococcus aureus and its role in starvation survival, stress resistance, and pathogenicity.</title>
        <authorList>
            <person name="Clements M.O."/>
            <person name="Watson S.P."/>
            <person name="Foster S.J."/>
        </authorList>
    </citation>
    <scope>NUCLEOTIDE SEQUENCE [GENOMIC DNA]</scope>
    <scope>EXPRESSION</scope>
    <scope>ENZYMATIC ACTIVITY</scope>
    <scope>COFACTOR</scope>
    <scope>FUNCTION</scope>
</reference>
<reference key="2">
    <citation type="book" date="2006" name="Gram positive pathogens, 2nd edition">
        <title>The Staphylococcus aureus NCTC 8325 genome.</title>
        <editorList>
            <person name="Fischetti V."/>
            <person name="Novick R."/>
            <person name="Ferretti J."/>
            <person name="Portnoy D."/>
            <person name="Rood J."/>
        </editorList>
        <authorList>
            <person name="Gillaspy A.F."/>
            <person name="Worrell V."/>
            <person name="Orvis J."/>
            <person name="Roe B.A."/>
            <person name="Dyer D.W."/>
            <person name="Iandolo J.J."/>
        </authorList>
    </citation>
    <scope>NUCLEOTIDE SEQUENCE [LARGE SCALE GENOMIC DNA]</scope>
    <source>
        <strain>NCTC 8325 / PS 47</strain>
    </source>
</reference>
<reference key="3">
    <citation type="journal article" date="2001" name="J. Bacteriol.">
        <title>Identification and characterization of a second superoxide dismutase gene (sodM) from Staphylococcus aureus.</title>
        <authorList>
            <person name="Wright Valderas M."/>
            <person name="Hart M.E."/>
        </authorList>
    </citation>
    <scope>ENZYMATIC ACTIVITY</scope>
</reference>
<reference key="4">
    <citation type="journal article" date="2002" name="J. Bacteriol.">
        <title>The superoxide dismutase gene sodM is unique to Staphylococcus aureus: absence of sodM in coagulase-negative staphylococci.</title>
        <authorList>
            <person name="Wright Valderas M."/>
            <person name="Gatson J.W."/>
            <person name="Wreyford N."/>
            <person name="Hart M.E."/>
        </authorList>
    </citation>
    <scope>ENZYMATIC ACTIVITY</scope>
    <scope>SUBUNIT</scope>
</reference>
<reference key="5">
    <citation type="journal article" date="2003" name="Microbiology">
        <title>Role and regulation of the superoxide dismutases of Staphylococcus aureus.</title>
        <authorList>
            <person name="Karavolos M.H."/>
            <person name="Horsburgh M.J."/>
            <person name="Ingham E."/>
            <person name="Foster S.J."/>
        </authorList>
    </citation>
    <scope>FUNCTION IN OXIDATIVE STRESS RESISTANCE</scope>
    <scope>EXPRESSION</scope>
    <scope>REGULATION</scope>
</reference>
<reference key="6">
    <citation type="journal article" date="2006" name="Microbiology">
        <title>The impairment of superoxide dismutase coordinates the derepression of the perR regulon in the response of Staphylococcus aureus to HOCl stress.</title>
        <authorList>
            <person name="Maalej S."/>
            <person name="Dammak I."/>
            <person name="Dukan S."/>
        </authorList>
    </citation>
    <scope>FUNCTION IN REGULATION OF PERR REGULON</scope>
</reference>
<gene>
    <name type="primary">sodA</name>
    <name type="ordered locus">SAOUHSC_01653</name>
</gene>
<sequence>MAFELPKLPYAFDALEPHFDKETMEIHHDRHHNTYVTKLNAAVEGTDLESKSIEEIVANLDSVPANIQTAVRNNGGGHLNHSLFWELLSPNSEEKGTVVEKIKEQWGSLEEFKKEFADKAAARFGSGWAWLVVNNGQLEIVTTPNQDNPLTEGKTPILGLDVWEHAYYLKYQNKRPDYIGAFWNVVNWEKVDELYNATK</sequence>
<keyword id="KW-0002">3D-structure</keyword>
<keyword id="KW-0464">Manganese</keyword>
<keyword id="KW-0479">Metal-binding</keyword>
<keyword id="KW-0560">Oxidoreductase</keyword>
<keyword id="KW-1185">Reference proteome</keyword>
<keyword id="KW-0346">Stress response</keyword>
<name>SODM1_STAA8</name>
<organism>
    <name type="scientific">Staphylococcus aureus (strain NCTC 8325 / PS 47)</name>
    <dbReference type="NCBI Taxonomy" id="93061"/>
    <lineage>
        <taxon>Bacteria</taxon>
        <taxon>Bacillati</taxon>
        <taxon>Bacillota</taxon>
        <taxon>Bacilli</taxon>
        <taxon>Bacillales</taxon>
        <taxon>Staphylococcaceae</taxon>
        <taxon>Staphylococcus</taxon>
    </lineage>
</organism>
<evidence type="ECO:0000250" key="1"/>
<evidence type="ECO:0000269" key="2">
    <source>
    </source>
</evidence>
<evidence type="ECO:0000269" key="3">
    <source>
    </source>
</evidence>
<evidence type="ECO:0000269" key="4">
    <source>
    </source>
</evidence>
<evidence type="ECO:0000269" key="5">
    <source>
    </source>
</evidence>
<evidence type="ECO:0000269" key="6">
    <source>
    </source>
</evidence>
<evidence type="ECO:0000305" key="7"/>
<evidence type="ECO:0007829" key="8">
    <source>
        <dbReference type="PDB" id="6EX3"/>
    </source>
</evidence>
<evidence type="ECO:0007829" key="9">
    <source>
        <dbReference type="PDB" id="6QV9"/>
    </source>
</evidence>
<protein>
    <recommendedName>
        <fullName>Superoxide dismutase [Mn] 1</fullName>
        <ecNumber>1.15.1.1</ecNumber>
    </recommendedName>
</protein>
<dbReference type="EC" id="1.15.1.1"/>
<dbReference type="EMBL" id="AF121672">
    <property type="protein sequence ID" value="AAD17309.1"/>
    <property type="molecule type" value="Genomic_DNA"/>
</dbReference>
<dbReference type="EMBL" id="CP000253">
    <property type="protein sequence ID" value="ABD30729.1"/>
    <property type="molecule type" value="Genomic_DNA"/>
</dbReference>
<dbReference type="RefSeq" id="WP_000863556.1">
    <property type="nucleotide sequence ID" value="NZ_LS483365.1"/>
</dbReference>
<dbReference type="RefSeq" id="YP_500165.1">
    <property type="nucleotide sequence ID" value="NC_007795.1"/>
</dbReference>
<dbReference type="PDB" id="5N56">
    <property type="method" value="X-ray"/>
    <property type="resolution" value="2.07 A"/>
    <property type="chains" value="A/B=1-199"/>
</dbReference>
<dbReference type="PDB" id="6EX3">
    <property type="method" value="X-ray"/>
    <property type="resolution" value="2.20 A"/>
    <property type="chains" value="A/B/C/D=1-199"/>
</dbReference>
<dbReference type="PDB" id="6QV9">
    <property type="method" value="X-ray"/>
    <property type="resolution" value="1.80 A"/>
    <property type="chains" value="A/B=1-199"/>
</dbReference>
<dbReference type="PDB" id="8Y17">
    <property type="method" value="X-ray"/>
    <property type="resolution" value="2.80 A"/>
    <property type="chains" value="A/B/C/D=1-199"/>
</dbReference>
<dbReference type="PDBsum" id="5N56"/>
<dbReference type="PDBsum" id="6EX3"/>
<dbReference type="PDBsum" id="6QV9"/>
<dbReference type="PDBsum" id="8Y17"/>
<dbReference type="SMR" id="P0A0J3"/>
<dbReference type="STRING" id="93061.SAOUHSC_01653"/>
<dbReference type="PaxDb" id="1280-SAXN108_1575"/>
<dbReference type="GeneID" id="3920105"/>
<dbReference type="KEGG" id="sao:SAOUHSC_01653"/>
<dbReference type="PATRIC" id="fig|93061.5.peg.1504"/>
<dbReference type="eggNOG" id="COG0605">
    <property type="taxonomic scope" value="Bacteria"/>
</dbReference>
<dbReference type="HOGENOM" id="CLU_031625_0_1_9"/>
<dbReference type="OrthoDB" id="9803125at2"/>
<dbReference type="PRO" id="PR:P0A0J3"/>
<dbReference type="Proteomes" id="UP000008816">
    <property type="component" value="Chromosome"/>
</dbReference>
<dbReference type="GO" id="GO:0005737">
    <property type="term" value="C:cytoplasm"/>
    <property type="evidence" value="ECO:0000318"/>
    <property type="project" value="GO_Central"/>
</dbReference>
<dbReference type="GO" id="GO:0046872">
    <property type="term" value="F:metal ion binding"/>
    <property type="evidence" value="ECO:0007669"/>
    <property type="project" value="UniProtKB-KW"/>
</dbReference>
<dbReference type="GO" id="GO:0004784">
    <property type="term" value="F:superoxide dismutase activity"/>
    <property type="evidence" value="ECO:0000318"/>
    <property type="project" value="GO_Central"/>
</dbReference>
<dbReference type="GO" id="GO:0019430">
    <property type="term" value="P:removal of superoxide radicals"/>
    <property type="evidence" value="ECO:0000318"/>
    <property type="project" value="GO_Central"/>
</dbReference>
<dbReference type="FunFam" id="1.10.287.990:FF:000001">
    <property type="entry name" value="Superoxide dismutase"/>
    <property type="match status" value="1"/>
</dbReference>
<dbReference type="FunFam" id="3.55.40.20:FF:000001">
    <property type="entry name" value="Superoxide dismutase"/>
    <property type="match status" value="1"/>
</dbReference>
<dbReference type="Gene3D" id="1.10.287.990">
    <property type="entry name" value="Fe,Mn superoxide dismutase (SOD) domain"/>
    <property type="match status" value="1"/>
</dbReference>
<dbReference type="Gene3D" id="3.55.40.20">
    <property type="entry name" value="Iron/manganese superoxide dismutase, C-terminal domain"/>
    <property type="match status" value="1"/>
</dbReference>
<dbReference type="InterPro" id="IPR001189">
    <property type="entry name" value="Mn/Fe_SOD"/>
</dbReference>
<dbReference type="InterPro" id="IPR019833">
    <property type="entry name" value="Mn/Fe_SOD_BS"/>
</dbReference>
<dbReference type="InterPro" id="IPR019832">
    <property type="entry name" value="Mn/Fe_SOD_C"/>
</dbReference>
<dbReference type="InterPro" id="IPR019831">
    <property type="entry name" value="Mn/Fe_SOD_N"/>
</dbReference>
<dbReference type="InterPro" id="IPR036324">
    <property type="entry name" value="Mn/Fe_SOD_N_sf"/>
</dbReference>
<dbReference type="InterPro" id="IPR036314">
    <property type="entry name" value="SOD_C_sf"/>
</dbReference>
<dbReference type="PANTHER" id="PTHR43595">
    <property type="entry name" value="37S RIBOSOMAL PROTEIN S26, MITOCHONDRIAL"/>
    <property type="match status" value="1"/>
</dbReference>
<dbReference type="PANTHER" id="PTHR43595:SF2">
    <property type="entry name" value="SMALL RIBOSOMAL SUBUNIT PROTEIN MS42"/>
    <property type="match status" value="1"/>
</dbReference>
<dbReference type="Pfam" id="PF02777">
    <property type="entry name" value="Sod_Fe_C"/>
    <property type="match status" value="1"/>
</dbReference>
<dbReference type="Pfam" id="PF00081">
    <property type="entry name" value="Sod_Fe_N"/>
    <property type="match status" value="1"/>
</dbReference>
<dbReference type="PIRSF" id="PIRSF000349">
    <property type="entry name" value="SODismutase"/>
    <property type="match status" value="1"/>
</dbReference>
<dbReference type="PRINTS" id="PR01703">
    <property type="entry name" value="MNSODISMTASE"/>
</dbReference>
<dbReference type="SUPFAM" id="SSF54719">
    <property type="entry name" value="Fe,Mn superoxide dismutase (SOD), C-terminal domain"/>
    <property type="match status" value="1"/>
</dbReference>
<dbReference type="SUPFAM" id="SSF46609">
    <property type="entry name" value="Fe,Mn superoxide dismutase (SOD), N-terminal domain"/>
    <property type="match status" value="1"/>
</dbReference>
<dbReference type="PROSITE" id="PS00088">
    <property type="entry name" value="SOD_MN"/>
    <property type="match status" value="1"/>
</dbReference>
<accession>P0A0J3</accession>
<accession>Q2FY20</accession>
<accession>Q9Z5W5</accession>